<dbReference type="EMBL" id="CP000423">
    <property type="protein sequence ID" value="ABJ70470.1"/>
    <property type="molecule type" value="Genomic_DNA"/>
</dbReference>
<dbReference type="RefSeq" id="WP_003565866.1">
    <property type="nucleotide sequence ID" value="NC_008526.1"/>
</dbReference>
<dbReference type="RefSeq" id="YP_806912.1">
    <property type="nucleotide sequence ID" value="NC_008526.1"/>
</dbReference>
<dbReference type="SMR" id="Q038A2"/>
<dbReference type="STRING" id="321967.LSEI_1697"/>
<dbReference type="PaxDb" id="321967-LSEI_1697"/>
<dbReference type="GeneID" id="57090399"/>
<dbReference type="KEGG" id="lca:LSEI_1697"/>
<dbReference type="PATRIC" id="fig|321967.11.peg.1677"/>
<dbReference type="HOGENOM" id="CLU_123265_0_1_9"/>
<dbReference type="Proteomes" id="UP000001651">
    <property type="component" value="Chromosome"/>
</dbReference>
<dbReference type="GO" id="GO:1990904">
    <property type="term" value="C:ribonucleoprotein complex"/>
    <property type="evidence" value="ECO:0007669"/>
    <property type="project" value="UniProtKB-KW"/>
</dbReference>
<dbReference type="GO" id="GO:0005840">
    <property type="term" value="C:ribosome"/>
    <property type="evidence" value="ECO:0007669"/>
    <property type="project" value="UniProtKB-KW"/>
</dbReference>
<dbReference type="GO" id="GO:0019843">
    <property type="term" value="F:rRNA binding"/>
    <property type="evidence" value="ECO:0007669"/>
    <property type="project" value="UniProtKB-UniRule"/>
</dbReference>
<dbReference type="GO" id="GO:0003735">
    <property type="term" value="F:structural constituent of ribosome"/>
    <property type="evidence" value="ECO:0007669"/>
    <property type="project" value="InterPro"/>
</dbReference>
<dbReference type="GO" id="GO:0000027">
    <property type="term" value="P:ribosomal large subunit assembly"/>
    <property type="evidence" value="ECO:0007669"/>
    <property type="project" value="UniProtKB-UniRule"/>
</dbReference>
<dbReference type="GO" id="GO:0006412">
    <property type="term" value="P:translation"/>
    <property type="evidence" value="ECO:0007669"/>
    <property type="project" value="InterPro"/>
</dbReference>
<dbReference type="CDD" id="cd07026">
    <property type="entry name" value="Ribosomal_L20"/>
    <property type="match status" value="1"/>
</dbReference>
<dbReference type="FunFam" id="1.10.1900.20:FF:000001">
    <property type="entry name" value="50S ribosomal protein L20"/>
    <property type="match status" value="1"/>
</dbReference>
<dbReference type="Gene3D" id="6.10.160.10">
    <property type="match status" value="1"/>
</dbReference>
<dbReference type="Gene3D" id="1.10.1900.20">
    <property type="entry name" value="Ribosomal protein L20"/>
    <property type="match status" value="1"/>
</dbReference>
<dbReference type="HAMAP" id="MF_00382">
    <property type="entry name" value="Ribosomal_bL20"/>
    <property type="match status" value="1"/>
</dbReference>
<dbReference type="InterPro" id="IPR005813">
    <property type="entry name" value="Ribosomal_bL20"/>
</dbReference>
<dbReference type="InterPro" id="IPR049946">
    <property type="entry name" value="RIBOSOMAL_L20_CS"/>
</dbReference>
<dbReference type="InterPro" id="IPR035566">
    <property type="entry name" value="Ribosomal_protein_bL20_C"/>
</dbReference>
<dbReference type="NCBIfam" id="TIGR01032">
    <property type="entry name" value="rplT_bact"/>
    <property type="match status" value="1"/>
</dbReference>
<dbReference type="PANTHER" id="PTHR10986">
    <property type="entry name" value="39S RIBOSOMAL PROTEIN L20"/>
    <property type="match status" value="1"/>
</dbReference>
<dbReference type="Pfam" id="PF00453">
    <property type="entry name" value="Ribosomal_L20"/>
    <property type="match status" value="1"/>
</dbReference>
<dbReference type="PRINTS" id="PR00062">
    <property type="entry name" value="RIBOSOMALL20"/>
</dbReference>
<dbReference type="SUPFAM" id="SSF74731">
    <property type="entry name" value="Ribosomal protein L20"/>
    <property type="match status" value="1"/>
</dbReference>
<dbReference type="PROSITE" id="PS00937">
    <property type="entry name" value="RIBOSOMAL_L20"/>
    <property type="match status" value="1"/>
</dbReference>
<gene>
    <name evidence="1" type="primary">rplT</name>
    <name type="ordered locus">LSEI_1697</name>
</gene>
<proteinExistence type="inferred from homology"/>
<sequence>MPRVKGGTVTRKRRKKVLKLAKGYRGAKHLLFKAANAQVMVSYRYAFRDRRAKKRDFRRLWIARINAAARMNDISYSKLMHGLKVANVDMNRKMLADLAVSDPDGFKAVADTAKKALA</sequence>
<accession>Q038A2</accession>
<evidence type="ECO:0000255" key="1">
    <source>
        <dbReference type="HAMAP-Rule" id="MF_00382"/>
    </source>
</evidence>
<evidence type="ECO:0000305" key="2"/>
<protein>
    <recommendedName>
        <fullName evidence="1">Large ribosomal subunit protein bL20</fullName>
    </recommendedName>
    <alternativeName>
        <fullName evidence="2">50S ribosomal protein L20</fullName>
    </alternativeName>
</protein>
<keyword id="KW-1185">Reference proteome</keyword>
<keyword id="KW-0687">Ribonucleoprotein</keyword>
<keyword id="KW-0689">Ribosomal protein</keyword>
<keyword id="KW-0694">RNA-binding</keyword>
<keyword id="KW-0699">rRNA-binding</keyword>
<organism>
    <name type="scientific">Lacticaseibacillus paracasei (strain ATCC 334 / BCRC 17002 / CCUG 31169 / CIP 107868 / KCTC 3260 / NRRL B-441)</name>
    <name type="common">Lactobacillus paracasei</name>
    <dbReference type="NCBI Taxonomy" id="321967"/>
    <lineage>
        <taxon>Bacteria</taxon>
        <taxon>Bacillati</taxon>
        <taxon>Bacillota</taxon>
        <taxon>Bacilli</taxon>
        <taxon>Lactobacillales</taxon>
        <taxon>Lactobacillaceae</taxon>
        <taxon>Lacticaseibacillus</taxon>
    </lineage>
</organism>
<reference key="1">
    <citation type="journal article" date="2006" name="Proc. Natl. Acad. Sci. U.S.A.">
        <title>Comparative genomics of the lactic acid bacteria.</title>
        <authorList>
            <person name="Makarova K.S."/>
            <person name="Slesarev A."/>
            <person name="Wolf Y.I."/>
            <person name="Sorokin A."/>
            <person name="Mirkin B."/>
            <person name="Koonin E.V."/>
            <person name="Pavlov A."/>
            <person name="Pavlova N."/>
            <person name="Karamychev V."/>
            <person name="Polouchine N."/>
            <person name="Shakhova V."/>
            <person name="Grigoriev I."/>
            <person name="Lou Y."/>
            <person name="Rohksar D."/>
            <person name="Lucas S."/>
            <person name="Huang K."/>
            <person name="Goodstein D.M."/>
            <person name="Hawkins T."/>
            <person name="Plengvidhya V."/>
            <person name="Welker D."/>
            <person name="Hughes J."/>
            <person name="Goh Y."/>
            <person name="Benson A."/>
            <person name="Baldwin K."/>
            <person name="Lee J.-H."/>
            <person name="Diaz-Muniz I."/>
            <person name="Dosti B."/>
            <person name="Smeianov V."/>
            <person name="Wechter W."/>
            <person name="Barabote R."/>
            <person name="Lorca G."/>
            <person name="Altermann E."/>
            <person name="Barrangou R."/>
            <person name="Ganesan B."/>
            <person name="Xie Y."/>
            <person name="Rawsthorne H."/>
            <person name="Tamir D."/>
            <person name="Parker C."/>
            <person name="Breidt F."/>
            <person name="Broadbent J.R."/>
            <person name="Hutkins R."/>
            <person name="O'Sullivan D."/>
            <person name="Steele J."/>
            <person name="Unlu G."/>
            <person name="Saier M.H. Jr."/>
            <person name="Klaenhammer T."/>
            <person name="Richardson P."/>
            <person name="Kozyavkin S."/>
            <person name="Weimer B.C."/>
            <person name="Mills D.A."/>
        </authorList>
    </citation>
    <scope>NUCLEOTIDE SEQUENCE [LARGE SCALE GENOMIC DNA]</scope>
    <source>
        <strain>ATCC 334 / BCRC 17002 / CCUG 31169 / CIP 107868 / KCTC 3260 / NRRL B-441</strain>
    </source>
</reference>
<comment type="function">
    <text evidence="1">Binds directly to 23S ribosomal RNA and is necessary for the in vitro assembly process of the 50S ribosomal subunit. It is not involved in the protein synthesizing functions of that subunit.</text>
</comment>
<comment type="similarity">
    <text evidence="1">Belongs to the bacterial ribosomal protein bL20 family.</text>
</comment>
<name>RL20_LACP3</name>
<feature type="chain" id="PRO_1000048998" description="Large ribosomal subunit protein bL20">
    <location>
        <begin position="1"/>
        <end position="118"/>
    </location>
</feature>